<accession>A0A218QWY4</accession>
<sequence>MVKSAMKIVILILFVLLIRVESKRNGYPDISDGKSSTCRTTVEDSEEDFCVNVCKSIQGRTGNCCLGTCFCFDLPDEQKIVDVMDTTIEYCEWDEEEEEE</sequence>
<feature type="signal peptide" evidence="2">
    <location>
        <begin position="1"/>
        <end position="22"/>
    </location>
</feature>
<feature type="chain" id="PRO_5011910055" description="Putative sodium channel toxin Ts26">
    <location>
        <begin position="23"/>
        <end position="100"/>
    </location>
</feature>
<feature type="domain" description="LCN-type CS-alpha/beta" evidence="3">
    <location>
        <begin position="24"/>
        <end position="92"/>
    </location>
</feature>
<feature type="disulfide bond" evidence="3">
    <location>
        <begin position="38"/>
        <end position="64"/>
    </location>
</feature>
<feature type="disulfide bond" evidence="3">
    <location>
        <begin position="50"/>
        <end position="69"/>
    </location>
</feature>
<feature type="disulfide bond" evidence="3">
    <location>
        <begin position="54"/>
        <end position="71"/>
    </location>
</feature>
<feature type="disulfide bond" evidence="3">
    <location>
        <begin position="65"/>
        <end position="91"/>
    </location>
</feature>
<comment type="function">
    <text evidence="7">Putative sodium channel toxin.</text>
</comment>
<comment type="subcellular location">
    <subcellularLocation>
        <location evidence="6 7">Secreted</location>
    </subcellularLocation>
</comment>
<comment type="tissue specificity">
    <text evidence="6 7">Expressed by the venom gland.</text>
</comment>
<comment type="domain">
    <text evidence="1">Has the structural arrangement of an alpha-helix connected to antiparallel beta-sheets by disulfide bonds (CS-alpha/beta).</text>
</comment>
<comment type="similarity">
    <text evidence="5">Belongs to the long (4 C-C) scorpion toxin superfamily. Sodium channel inhibitor family.</text>
</comment>
<name>SCX26_TITSE</name>
<protein>
    <recommendedName>
        <fullName evidence="4">Putative sodium channel toxin Ts26</fullName>
    </recommendedName>
    <alternativeName>
        <fullName evidence="4">Putative NaTx</fullName>
    </alternativeName>
    <alternativeName>
        <fullName evidence="5">Tityustoxin-26</fullName>
    </alternativeName>
</protein>
<proteinExistence type="inferred from homology"/>
<reference evidence="8 9" key="1">
    <citation type="journal article" date="2018" name="PLoS ONE">
        <title>Proteomic endorsed transcriptomic profiles of venom glands from Tityus obscurus and T. serrulatus scorpions.</title>
        <authorList>
            <person name="de Oliveira U.C."/>
            <person name="Nishiyama M.Y. Jr."/>
            <person name="Dos Santos M.B.V."/>
            <person name="Santos-da-Silva A.P."/>
            <person name="Chalkidis H.M."/>
            <person name="Souza-Imberg A."/>
            <person name="Candido D.M."/>
            <person name="Yamanouye N."/>
            <person name="Dorce V.A.C."/>
            <person name="Junqueira-de-Azevedo I.L.M."/>
        </authorList>
    </citation>
    <scope>NUCLEOTIDE SEQUENCE [MRNA]</scope>
    <source>
        <tissue>Telson</tissue>
    </source>
</reference>
<reference evidence="10" key="2">
    <citation type="journal article" date="2021" name="Toxicon">
        <title>Novel components of Tityus serrulatus venom: a transcriptomic approach.</title>
        <authorList>
            <person name="Kalapothakis Y."/>
            <person name="Miranda K."/>
            <person name="Pereira A.H."/>
            <person name="Witt A.S.A."/>
            <person name="Marani C."/>
            <person name="Martins A.P."/>
            <person name="Leal H.G."/>
            <person name="Campos-Junior E."/>
            <person name="Pimenta A.M.C."/>
            <person name="Borges A."/>
            <person name="Chavez-Olortegui C."/>
            <person name="Kalapothakis E."/>
        </authorList>
    </citation>
    <scope>NUCLEOTIDE SEQUENCE [MRNA]</scope>
    <source>
        <tissue>Telson</tissue>
    </source>
</reference>
<dbReference type="EMBL" id="GEUW01000057">
    <property type="protein sequence ID" value="JAW06988.1"/>
    <property type="molecule type" value="mRNA"/>
</dbReference>
<dbReference type="EMBL" id="GEUW01000036">
    <property type="protein sequence ID" value="JAW07009.1"/>
    <property type="molecule type" value="mRNA"/>
</dbReference>
<dbReference type="EMBL" id="MT450719">
    <property type="protein sequence ID" value="QPD99055.1"/>
    <property type="molecule type" value="mRNA"/>
</dbReference>
<dbReference type="SMR" id="A0A218QWY4"/>
<dbReference type="GO" id="GO:0005576">
    <property type="term" value="C:extracellular region"/>
    <property type="evidence" value="ECO:0007669"/>
    <property type="project" value="UniProtKB-SubCell"/>
</dbReference>
<dbReference type="GO" id="GO:0017080">
    <property type="term" value="F:sodium channel regulator activity"/>
    <property type="evidence" value="ECO:0007669"/>
    <property type="project" value="UniProtKB-KW"/>
</dbReference>
<dbReference type="GO" id="GO:0090729">
    <property type="term" value="F:toxin activity"/>
    <property type="evidence" value="ECO:0007669"/>
    <property type="project" value="UniProtKB-KW"/>
</dbReference>
<dbReference type="CDD" id="cd23106">
    <property type="entry name" value="neurotoxins_LC_scorpion"/>
    <property type="match status" value="1"/>
</dbReference>
<dbReference type="Gene3D" id="3.30.30.10">
    <property type="entry name" value="Knottin, scorpion toxin-like"/>
    <property type="match status" value="1"/>
</dbReference>
<dbReference type="InterPro" id="IPR036574">
    <property type="entry name" value="Scorpion_toxin-like_sf"/>
</dbReference>
<dbReference type="SUPFAM" id="SSF57095">
    <property type="entry name" value="Scorpion toxin-like"/>
    <property type="match status" value="1"/>
</dbReference>
<keyword id="KW-1015">Disulfide bond</keyword>
<keyword id="KW-0872">Ion channel impairing toxin</keyword>
<keyword id="KW-0528">Neurotoxin</keyword>
<keyword id="KW-0964">Secreted</keyword>
<keyword id="KW-0732">Signal</keyword>
<keyword id="KW-0800">Toxin</keyword>
<keyword id="KW-0738">Voltage-gated sodium channel impairing toxin</keyword>
<organism>
    <name type="scientific">Tityus serrulatus</name>
    <name type="common">Brazilian scorpion</name>
    <dbReference type="NCBI Taxonomy" id="6887"/>
    <lineage>
        <taxon>Eukaryota</taxon>
        <taxon>Metazoa</taxon>
        <taxon>Ecdysozoa</taxon>
        <taxon>Arthropoda</taxon>
        <taxon>Chelicerata</taxon>
        <taxon>Arachnida</taxon>
        <taxon>Scorpiones</taxon>
        <taxon>Buthida</taxon>
        <taxon>Buthoidea</taxon>
        <taxon>Buthidae</taxon>
        <taxon>Tityus</taxon>
    </lineage>
</organism>
<evidence type="ECO:0000250" key="1">
    <source>
        <dbReference type="UniProtKB" id="H1ZZI9"/>
    </source>
</evidence>
<evidence type="ECO:0000255" key="2"/>
<evidence type="ECO:0000255" key="3">
    <source>
        <dbReference type="PROSITE-ProRule" id="PRU01210"/>
    </source>
</evidence>
<evidence type="ECO:0000303" key="4">
    <source>
    </source>
</evidence>
<evidence type="ECO:0000305" key="5"/>
<evidence type="ECO:0000305" key="6">
    <source>
    </source>
</evidence>
<evidence type="ECO:0000305" key="7">
    <source>
    </source>
</evidence>
<evidence type="ECO:0000312" key="8">
    <source>
        <dbReference type="EMBL" id="JAW06988.1"/>
    </source>
</evidence>
<evidence type="ECO:0000312" key="9">
    <source>
        <dbReference type="EMBL" id="JAW07009.1"/>
    </source>
</evidence>
<evidence type="ECO:0000312" key="10">
    <source>
        <dbReference type="EMBL" id="QPD99055.1"/>
    </source>
</evidence>